<accession>Q4PG15</accession>
<accession>A0A0D1CD44</accession>
<gene>
    <name type="primary">SWC4</name>
    <name type="ORF">UMAG_00948</name>
</gene>
<name>SWC4_MYCMD</name>
<protein>
    <recommendedName>
        <fullName>SWR1-complex protein 4</fullName>
    </recommendedName>
</protein>
<evidence type="ECO:0000250" key="1"/>
<evidence type="ECO:0000256" key="2">
    <source>
        <dbReference type="SAM" id="MobiDB-lite"/>
    </source>
</evidence>
<evidence type="ECO:0000305" key="3"/>
<keyword id="KW-0010">Activator</keyword>
<keyword id="KW-0156">Chromatin regulator</keyword>
<keyword id="KW-0227">DNA damage</keyword>
<keyword id="KW-0234">DNA repair</keyword>
<keyword id="KW-0539">Nucleus</keyword>
<keyword id="KW-1185">Reference proteome</keyword>
<keyword id="KW-0804">Transcription</keyword>
<keyword id="KW-0805">Transcription regulation</keyword>
<feature type="chain" id="PRO_0000076345" description="SWR1-complex protein 4">
    <location>
        <begin position="1"/>
        <end position="615"/>
    </location>
</feature>
<feature type="domain" description="SANT">
    <location>
        <begin position="185"/>
        <end position="256"/>
    </location>
</feature>
<feature type="region of interest" description="Disordered" evidence="2">
    <location>
        <begin position="1"/>
        <end position="56"/>
    </location>
</feature>
<feature type="region of interest" description="Disordered" evidence="2">
    <location>
        <begin position="367"/>
        <end position="418"/>
    </location>
</feature>
<feature type="region of interest" description="Disordered" evidence="2">
    <location>
        <begin position="575"/>
        <end position="615"/>
    </location>
</feature>
<feature type="compositionally biased region" description="Low complexity" evidence="2">
    <location>
        <begin position="16"/>
        <end position="52"/>
    </location>
</feature>
<feature type="compositionally biased region" description="Low complexity" evidence="2">
    <location>
        <begin position="391"/>
        <end position="407"/>
    </location>
</feature>
<feature type="compositionally biased region" description="Low complexity" evidence="2">
    <location>
        <begin position="584"/>
        <end position="594"/>
    </location>
</feature>
<feature type="compositionally biased region" description="Polar residues" evidence="2">
    <location>
        <begin position="595"/>
        <end position="615"/>
    </location>
</feature>
<organism>
    <name type="scientific">Mycosarcoma maydis</name>
    <name type="common">Corn smut fungus</name>
    <name type="synonym">Ustilago maydis</name>
    <dbReference type="NCBI Taxonomy" id="5270"/>
    <lineage>
        <taxon>Eukaryota</taxon>
        <taxon>Fungi</taxon>
        <taxon>Dikarya</taxon>
        <taxon>Basidiomycota</taxon>
        <taxon>Ustilaginomycotina</taxon>
        <taxon>Ustilaginomycetes</taxon>
        <taxon>Ustilaginales</taxon>
        <taxon>Ustilaginaceae</taxon>
        <taxon>Mycosarcoma</taxon>
    </lineage>
</organism>
<reference key="1">
    <citation type="journal article" date="2006" name="Nature">
        <title>Insights from the genome of the biotrophic fungal plant pathogen Ustilago maydis.</title>
        <authorList>
            <person name="Kaemper J."/>
            <person name="Kahmann R."/>
            <person name="Boelker M."/>
            <person name="Ma L.-J."/>
            <person name="Brefort T."/>
            <person name="Saville B.J."/>
            <person name="Banuett F."/>
            <person name="Kronstad J.W."/>
            <person name="Gold S.E."/>
            <person name="Mueller O."/>
            <person name="Perlin M.H."/>
            <person name="Woesten H.A.B."/>
            <person name="de Vries R."/>
            <person name="Ruiz-Herrera J."/>
            <person name="Reynaga-Pena C.G."/>
            <person name="Snetselaar K."/>
            <person name="McCann M."/>
            <person name="Perez-Martin J."/>
            <person name="Feldbruegge M."/>
            <person name="Basse C.W."/>
            <person name="Steinberg G."/>
            <person name="Ibeas J.I."/>
            <person name="Holloman W."/>
            <person name="Guzman P."/>
            <person name="Farman M.L."/>
            <person name="Stajich J.E."/>
            <person name="Sentandreu R."/>
            <person name="Gonzalez-Prieto J.M."/>
            <person name="Kennell J.C."/>
            <person name="Molina L."/>
            <person name="Schirawski J."/>
            <person name="Mendoza-Mendoza A."/>
            <person name="Greilinger D."/>
            <person name="Muench K."/>
            <person name="Roessel N."/>
            <person name="Scherer M."/>
            <person name="Vranes M."/>
            <person name="Ladendorf O."/>
            <person name="Vincon V."/>
            <person name="Fuchs U."/>
            <person name="Sandrock B."/>
            <person name="Meng S."/>
            <person name="Ho E.C.H."/>
            <person name="Cahill M.J."/>
            <person name="Boyce K.J."/>
            <person name="Klose J."/>
            <person name="Klosterman S.J."/>
            <person name="Deelstra H.J."/>
            <person name="Ortiz-Castellanos L."/>
            <person name="Li W."/>
            <person name="Sanchez-Alonso P."/>
            <person name="Schreier P.H."/>
            <person name="Haeuser-Hahn I."/>
            <person name="Vaupel M."/>
            <person name="Koopmann E."/>
            <person name="Friedrich G."/>
            <person name="Voss H."/>
            <person name="Schlueter T."/>
            <person name="Margolis J."/>
            <person name="Platt D."/>
            <person name="Swimmer C."/>
            <person name="Gnirke A."/>
            <person name="Chen F."/>
            <person name="Vysotskaia V."/>
            <person name="Mannhaupt G."/>
            <person name="Gueldener U."/>
            <person name="Muensterkoetter M."/>
            <person name="Haase D."/>
            <person name="Oesterheld M."/>
            <person name="Mewes H.-W."/>
            <person name="Mauceli E.W."/>
            <person name="DeCaprio D."/>
            <person name="Wade C.M."/>
            <person name="Butler J."/>
            <person name="Young S.K."/>
            <person name="Jaffe D.B."/>
            <person name="Calvo S.E."/>
            <person name="Nusbaum C."/>
            <person name="Galagan J.E."/>
            <person name="Birren B.W."/>
        </authorList>
    </citation>
    <scope>NUCLEOTIDE SEQUENCE [LARGE SCALE GENOMIC DNA]</scope>
    <source>
        <strain>DSM 14603 / FGSC 9021 / UM521</strain>
    </source>
</reference>
<reference key="2">
    <citation type="submission" date="2014-09" db="EMBL/GenBank/DDBJ databases">
        <authorList>
            <person name="Gueldener U."/>
            <person name="Muensterkoetter M."/>
            <person name="Walter M.C."/>
            <person name="Mannhaupt G."/>
            <person name="Kahmann R."/>
        </authorList>
    </citation>
    <scope>GENOME REANNOTATION</scope>
    <source>
        <strain>DSM 14603 / FGSC 9021 / UM521</strain>
    </source>
</reference>
<dbReference type="EMBL" id="CM003141">
    <property type="protein sequence ID" value="KIS71032.1"/>
    <property type="molecule type" value="Genomic_DNA"/>
</dbReference>
<dbReference type="RefSeq" id="XP_011386947.1">
    <property type="nucleotide sequence ID" value="XM_011388645.1"/>
</dbReference>
<dbReference type="SMR" id="Q4PG15"/>
<dbReference type="FunCoup" id="Q4PG15">
    <property type="interactions" value="524"/>
</dbReference>
<dbReference type="STRING" id="237631.Q4PG15"/>
<dbReference type="EnsemblFungi" id="KIS71032">
    <property type="protein sequence ID" value="KIS71032"/>
    <property type="gene ID" value="UMAG_00948"/>
</dbReference>
<dbReference type="GeneID" id="23562103"/>
<dbReference type="KEGG" id="uma:UMAG_00948"/>
<dbReference type="VEuPathDB" id="FungiDB:UMAG_00948"/>
<dbReference type="eggNOG" id="KOG2656">
    <property type="taxonomic scope" value="Eukaryota"/>
</dbReference>
<dbReference type="HOGENOM" id="CLU_018539_4_1_1"/>
<dbReference type="InParanoid" id="Q4PG15"/>
<dbReference type="OMA" id="EQNEAKY"/>
<dbReference type="OrthoDB" id="19740at2759"/>
<dbReference type="Proteomes" id="UP000000561">
    <property type="component" value="Chromosome 2"/>
</dbReference>
<dbReference type="GO" id="GO:0035267">
    <property type="term" value="C:NuA4 histone acetyltransferase complex"/>
    <property type="evidence" value="ECO:0000318"/>
    <property type="project" value="GO_Central"/>
</dbReference>
<dbReference type="GO" id="GO:0000812">
    <property type="term" value="C:Swr1 complex"/>
    <property type="evidence" value="ECO:0000318"/>
    <property type="project" value="GO_Central"/>
</dbReference>
<dbReference type="GO" id="GO:0003714">
    <property type="term" value="F:transcription corepressor activity"/>
    <property type="evidence" value="ECO:0000318"/>
    <property type="project" value="GO_Central"/>
</dbReference>
<dbReference type="GO" id="GO:0006338">
    <property type="term" value="P:chromatin remodeling"/>
    <property type="evidence" value="ECO:0007669"/>
    <property type="project" value="InterPro"/>
</dbReference>
<dbReference type="GO" id="GO:0006281">
    <property type="term" value="P:DNA repair"/>
    <property type="evidence" value="ECO:0007669"/>
    <property type="project" value="UniProtKB-KW"/>
</dbReference>
<dbReference type="GO" id="GO:0000122">
    <property type="term" value="P:negative regulation of transcription by RNA polymerase II"/>
    <property type="evidence" value="ECO:0000318"/>
    <property type="project" value="GO_Central"/>
</dbReference>
<dbReference type="FunFam" id="1.10.10.60:FF:000521">
    <property type="entry name" value="SWR1-complex protein 4"/>
    <property type="match status" value="1"/>
</dbReference>
<dbReference type="Gene3D" id="1.10.10.60">
    <property type="entry name" value="Homeodomain-like"/>
    <property type="match status" value="1"/>
</dbReference>
<dbReference type="InterPro" id="IPR032563">
    <property type="entry name" value="DAMP1_SANT-like"/>
</dbReference>
<dbReference type="InterPro" id="IPR027109">
    <property type="entry name" value="Swc4/Dmap1"/>
</dbReference>
<dbReference type="PANTHER" id="PTHR12855:SF10">
    <property type="entry name" value="DNA METHYLTRANSFERASE 1-ASSOCIATED PROTEIN 1"/>
    <property type="match status" value="1"/>
</dbReference>
<dbReference type="PANTHER" id="PTHR12855">
    <property type="entry name" value="DNA METHYLTRANSFERASE 1-ASSOCIATED PROTEIN 1 FAMILY MEMBER"/>
    <property type="match status" value="1"/>
</dbReference>
<dbReference type="Pfam" id="PF16282">
    <property type="entry name" value="SANT_DAMP1_like"/>
    <property type="match status" value="1"/>
</dbReference>
<proteinExistence type="inferred from homology"/>
<sequence>MTSNDVRDILSLPERPASQPSSSAQASGSSSRNRKSSGSNNPHPSSAASASRPKPKYDGMTRELFALLGDNAPSLAMTHGLDAEGKPVMGLGGLFKPKFKRRKEKVRQWRWTPFLNSARDDTQIDDDVPEINHGLILHHWAPARSFSTTAADGISAEDADIDTKYQYAAFNTTSGVYSYSNDEYIQHLRDDDWTKEETDYLMELCTAYDLRFVVIHDRYDWAAAQASFLAGSTSAVPQPVKERSMEDLKVRYYAICRRLIRSRISTDDVETRQMLLSTYAFDKQREVERKKAVARLYTRTPEQLAEEEALYVEIRRIEQNEAKYASEREELLRLLGGWESLPSSSPHAVAAAGSGIASLLGAEEDSTAKGRAGSANKKRKLQQIEDNGTPGADDAGSSTGATAAATSRPSANLTSKQRAELRQAQFDEMQCIVRFASNANATTDASAGGIAGPAAVSAASSSTRPPYAYLVGTASTLPAVTSNPANPTSGHGVYLRSSRMLAPRPNLVLRTTQVLSESDPPVGPRLIFPTAKNVEKWENLIGAVTTGLEMRKQLERVNAELRIAKQRIAAALHPNRMADKSEASAEAVESRSAAPTENSIAATTSTHAQITIKTE</sequence>
<comment type="function">
    <text evidence="1">Component of the SWR1 complex which mediates the ATP-dependent exchange of histone H2A for the H2A variant HZT1 leading to transcriptional regulation of selected genes by chromatin remodeling. Component of the NuA4 histone acetyltransferase complex which is involved in transcriptional activation of selected genes principally by acetylation of nucleosomal histone H4 and H2A. The NuA4 complex is also involved in DNA repair (By similarity).</text>
</comment>
<comment type="subunit">
    <text evidence="1">Component of the SWR1 chromatin-remodeling complex and of the NuA4 histone acetyltransferase complex.</text>
</comment>
<comment type="subcellular location">
    <subcellularLocation>
        <location evidence="1">Nucleus</location>
    </subcellularLocation>
</comment>
<comment type="similarity">
    <text evidence="3">Belongs to the SWC4 family.</text>
</comment>